<gene>
    <name type="primary">dgat1</name>
    <name type="ORF">DDB_G0271342</name>
</gene>
<protein>
    <recommendedName>
        <fullName evidence="5">Diacylglycerol O-acyltransferase 1</fullName>
        <ecNumber evidence="1">2.3.1.20</ecNumber>
    </recommendedName>
    <alternativeName>
        <fullName>Acyl-CoA retinol O-fatty-acyltransferase</fullName>
        <shortName>ARAT</shortName>
        <shortName>Retinol O-fatty-acyltransferase</shortName>
        <ecNumber evidence="1">2.3.1.76</ecNumber>
    </alternativeName>
</protein>
<name>DGAT1_DICDI</name>
<reference key="1">
    <citation type="journal article" date="2002" name="Nature">
        <title>Sequence and analysis of chromosome 2 of Dictyostelium discoideum.</title>
        <authorList>
            <person name="Gloeckner G."/>
            <person name="Eichinger L."/>
            <person name="Szafranski K."/>
            <person name="Pachebat J.A."/>
            <person name="Bankier A.T."/>
            <person name="Dear P.H."/>
            <person name="Lehmann R."/>
            <person name="Baumgart C."/>
            <person name="Parra G."/>
            <person name="Abril J.F."/>
            <person name="Guigo R."/>
            <person name="Kumpf K."/>
            <person name="Tunggal B."/>
            <person name="Cox E.C."/>
            <person name="Quail M.A."/>
            <person name="Platzer M."/>
            <person name="Rosenthal A."/>
            <person name="Noegel A.A."/>
        </authorList>
    </citation>
    <scope>NUCLEOTIDE SEQUENCE [LARGE SCALE GENOMIC DNA]</scope>
    <source>
        <strain>AX4</strain>
    </source>
</reference>
<reference key="2">
    <citation type="journal article" date="2005" name="Nature">
        <title>The genome of the social amoeba Dictyostelium discoideum.</title>
        <authorList>
            <person name="Eichinger L."/>
            <person name="Pachebat J.A."/>
            <person name="Gloeckner G."/>
            <person name="Rajandream M.A."/>
            <person name="Sucgang R."/>
            <person name="Berriman M."/>
            <person name="Song J."/>
            <person name="Olsen R."/>
            <person name="Szafranski K."/>
            <person name="Xu Q."/>
            <person name="Tunggal B."/>
            <person name="Kummerfeld S."/>
            <person name="Madera M."/>
            <person name="Konfortov B.A."/>
            <person name="Rivero F."/>
            <person name="Bankier A.T."/>
            <person name="Lehmann R."/>
            <person name="Hamlin N."/>
            <person name="Davies R."/>
            <person name="Gaudet P."/>
            <person name="Fey P."/>
            <person name="Pilcher K."/>
            <person name="Chen G."/>
            <person name="Saunders D."/>
            <person name="Sodergren E.J."/>
            <person name="Davis P."/>
            <person name="Kerhornou A."/>
            <person name="Nie X."/>
            <person name="Hall N."/>
            <person name="Anjard C."/>
            <person name="Hemphill L."/>
            <person name="Bason N."/>
            <person name="Farbrother P."/>
            <person name="Desany B."/>
            <person name="Just E."/>
            <person name="Morio T."/>
            <person name="Rost R."/>
            <person name="Churcher C.M."/>
            <person name="Cooper J."/>
            <person name="Haydock S."/>
            <person name="van Driessche N."/>
            <person name="Cronin A."/>
            <person name="Goodhead I."/>
            <person name="Muzny D.M."/>
            <person name="Mourier T."/>
            <person name="Pain A."/>
            <person name="Lu M."/>
            <person name="Harper D."/>
            <person name="Lindsay R."/>
            <person name="Hauser H."/>
            <person name="James K.D."/>
            <person name="Quiles M."/>
            <person name="Madan Babu M."/>
            <person name="Saito T."/>
            <person name="Buchrieser C."/>
            <person name="Wardroper A."/>
            <person name="Felder M."/>
            <person name="Thangavelu M."/>
            <person name="Johnson D."/>
            <person name="Knights A."/>
            <person name="Loulseged H."/>
            <person name="Mungall K.L."/>
            <person name="Oliver K."/>
            <person name="Price C."/>
            <person name="Quail M.A."/>
            <person name="Urushihara H."/>
            <person name="Hernandez J."/>
            <person name="Rabbinowitsch E."/>
            <person name="Steffen D."/>
            <person name="Sanders M."/>
            <person name="Ma J."/>
            <person name="Kohara Y."/>
            <person name="Sharp S."/>
            <person name="Simmonds M.N."/>
            <person name="Spiegler S."/>
            <person name="Tivey A."/>
            <person name="Sugano S."/>
            <person name="White B."/>
            <person name="Walker D."/>
            <person name="Woodward J.R."/>
            <person name="Winckler T."/>
            <person name="Tanaka Y."/>
            <person name="Shaulsky G."/>
            <person name="Schleicher M."/>
            <person name="Weinstock G.M."/>
            <person name="Rosenthal A."/>
            <person name="Cox E.C."/>
            <person name="Chisholm R.L."/>
            <person name="Gibbs R.A."/>
            <person name="Loomis W.F."/>
            <person name="Platzer M."/>
            <person name="Kay R.R."/>
            <person name="Williams J.G."/>
            <person name="Dear P.H."/>
            <person name="Noegel A.A."/>
            <person name="Barrell B.G."/>
            <person name="Kuspa A."/>
        </authorList>
    </citation>
    <scope>NUCLEOTIDE SEQUENCE [LARGE SCALE GENOMIC DNA]</scope>
    <source>
        <strain>AX4</strain>
    </source>
</reference>
<proteinExistence type="inferred from homology"/>
<keyword id="KW-0012">Acyltransferase</keyword>
<keyword id="KW-0256">Endoplasmic reticulum</keyword>
<keyword id="KW-0319">Glycerol metabolism</keyword>
<keyword id="KW-0444">Lipid biosynthesis</keyword>
<keyword id="KW-0443">Lipid metabolism</keyword>
<keyword id="KW-0472">Membrane</keyword>
<keyword id="KW-1185">Reference proteome</keyword>
<keyword id="KW-0808">Transferase</keyword>
<keyword id="KW-0812">Transmembrane</keyword>
<keyword id="KW-1133">Transmembrane helix</keyword>
<organism>
    <name type="scientific">Dictyostelium discoideum</name>
    <name type="common">Social amoeba</name>
    <dbReference type="NCBI Taxonomy" id="44689"/>
    <lineage>
        <taxon>Eukaryota</taxon>
        <taxon>Amoebozoa</taxon>
        <taxon>Evosea</taxon>
        <taxon>Eumycetozoa</taxon>
        <taxon>Dictyostelia</taxon>
        <taxon>Dictyosteliales</taxon>
        <taxon>Dictyosteliaceae</taxon>
        <taxon>Dictyostelium</taxon>
    </lineage>
</organism>
<feature type="chain" id="PRO_0000377488" description="Diacylglycerol O-acyltransferase 1">
    <location>
        <begin position="1"/>
        <end position="617"/>
    </location>
</feature>
<feature type="transmembrane region" description="Helical" evidence="3">
    <location>
        <begin position="217"/>
        <end position="237"/>
    </location>
</feature>
<feature type="transmembrane region" description="Helical" evidence="3">
    <location>
        <begin position="254"/>
        <end position="274"/>
    </location>
</feature>
<feature type="transmembrane region" description="Helical" evidence="3">
    <location>
        <begin position="306"/>
        <end position="326"/>
    </location>
</feature>
<feature type="transmembrane region" description="Helical" evidence="3">
    <location>
        <begin position="399"/>
        <end position="419"/>
    </location>
</feature>
<feature type="transmembrane region" description="Helical" evidence="3">
    <location>
        <begin position="449"/>
        <end position="469"/>
    </location>
</feature>
<feature type="transmembrane region" description="Helical" evidence="3">
    <location>
        <begin position="520"/>
        <end position="540"/>
    </location>
</feature>
<feature type="transmembrane region" description="Helical" evidence="3">
    <location>
        <begin position="545"/>
        <end position="565"/>
    </location>
</feature>
<feature type="transmembrane region" description="Helical" evidence="3">
    <location>
        <begin position="570"/>
        <end position="590"/>
    </location>
</feature>
<feature type="region of interest" description="Disordered" evidence="4">
    <location>
        <begin position="1"/>
        <end position="52"/>
    </location>
</feature>
<feature type="region of interest" description="Disordered" evidence="4">
    <location>
        <begin position="95"/>
        <end position="186"/>
    </location>
</feature>
<feature type="short sequence motif" description="FYXDWWN motif" evidence="1">
    <location>
        <begin position="477"/>
        <end position="483"/>
    </location>
</feature>
<feature type="compositionally biased region" description="Polar residues" evidence="4">
    <location>
        <begin position="7"/>
        <end position="17"/>
    </location>
</feature>
<feature type="compositionally biased region" description="Low complexity" evidence="4">
    <location>
        <begin position="18"/>
        <end position="34"/>
    </location>
</feature>
<feature type="compositionally biased region" description="Low complexity" evidence="4">
    <location>
        <begin position="96"/>
        <end position="105"/>
    </location>
</feature>
<feature type="compositionally biased region" description="Polar residues" evidence="4">
    <location>
        <begin position="106"/>
        <end position="140"/>
    </location>
</feature>
<feature type="compositionally biased region" description="Low complexity" evidence="4">
    <location>
        <begin position="160"/>
        <end position="177"/>
    </location>
</feature>
<feature type="active site" evidence="1">
    <location>
        <position position="532"/>
    </location>
</feature>
<evidence type="ECO:0000250" key="1">
    <source>
        <dbReference type="UniProtKB" id="O75907"/>
    </source>
</evidence>
<evidence type="ECO:0000250" key="2">
    <source>
        <dbReference type="UniProtKB" id="Q9Z2A7"/>
    </source>
</evidence>
<evidence type="ECO:0000255" key="3"/>
<evidence type="ECO:0000256" key="4">
    <source>
        <dbReference type="SAM" id="MobiDB-lite"/>
    </source>
</evidence>
<evidence type="ECO:0000305" key="5"/>
<dbReference type="EC" id="2.3.1.20" evidence="1"/>
<dbReference type="EC" id="2.3.1.76" evidence="1"/>
<dbReference type="EMBL" id="AAFI02000006">
    <property type="protein sequence ID" value="EAL71801.2"/>
    <property type="molecule type" value="Genomic_DNA"/>
</dbReference>
<dbReference type="RefSeq" id="XP_645633.2">
    <property type="nucleotide sequence ID" value="XM_640541.2"/>
</dbReference>
<dbReference type="SMR" id="Q55BH9"/>
<dbReference type="FunCoup" id="Q55BH9">
    <property type="interactions" value="114"/>
</dbReference>
<dbReference type="STRING" id="44689.Q55BH9"/>
<dbReference type="PaxDb" id="44689-DDB0304727"/>
<dbReference type="EnsemblProtists" id="EAL71801">
    <property type="protein sequence ID" value="EAL71801"/>
    <property type="gene ID" value="DDB_G0271342"/>
</dbReference>
<dbReference type="GeneID" id="8617825"/>
<dbReference type="KEGG" id="ddi:DDB_G0271342"/>
<dbReference type="dictyBase" id="DDB_G0271342">
    <property type="gene designation" value="dgat1"/>
</dbReference>
<dbReference type="VEuPathDB" id="AmoebaDB:DDB_G0271342"/>
<dbReference type="eggNOG" id="KOG0380">
    <property type="taxonomic scope" value="Eukaryota"/>
</dbReference>
<dbReference type="HOGENOM" id="CLU_018190_0_0_1"/>
<dbReference type="InParanoid" id="Q55BH9"/>
<dbReference type="OMA" id="RCHDYRR"/>
<dbReference type="PhylomeDB" id="Q55BH9"/>
<dbReference type="Reactome" id="R-DDI-1482883">
    <property type="pathway name" value="Acyl chain remodeling of DAG and TAG"/>
</dbReference>
<dbReference type="Reactome" id="R-DDI-6798695">
    <property type="pathway name" value="Neutrophil degranulation"/>
</dbReference>
<dbReference type="Reactome" id="R-DDI-75109">
    <property type="pathway name" value="Triglyceride biosynthesis"/>
</dbReference>
<dbReference type="UniPathway" id="UPA00230"/>
<dbReference type="PRO" id="PR:Q55BH9"/>
<dbReference type="Proteomes" id="UP000002195">
    <property type="component" value="Chromosome 2"/>
</dbReference>
<dbReference type="GO" id="GO:0005789">
    <property type="term" value="C:endoplasmic reticulum membrane"/>
    <property type="evidence" value="ECO:0000314"/>
    <property type="project" value="dictyBase"/>
</dbReference>
<dbReference type="GO" id="GO:0004144">
    <property type="term" value="F:diacylglycerol O-acyltransferase activity"/>
    <property type="evidence" value="ECO:0000314"/>
    <property type="project" value="dictyBase"/>
</dbReference>
<dbReference type="GO" id="GO:0050252">
    <property type="term" value="F:retinol O-fatty-acyltransferase activity"/>
    <property type="evidence" value="ECO:0007669"/>
    <property type="project" value="UniProtKB-EC"/>
</dbReference>
<dbReference type="GO" id="GO:0008611">
    <property type="term" value="P:ether lipid biosynthetic process"/>
    <property type="evidence" value="ECO:0000314"/>
    <property type="project" value="dictyBase"/>
</dbReference>
<dbReference type="GO" id="GO:0006071">
    <property type="term" value="P:glycerol metabolic process"/>
    <property type="evidence" value="ECO:0007669"/>
    <property type="project" value="UniProtKB-KW"/>
</dbReference>
<dbReference type="GO" id="GO:0140042">
    <property type="term" value="P:lipid droplet formation"/>
    <property type="evidence" value="ECO:0000315"/>
    <property type="project" value="dictyBase"/>
</dbReference>
<dbReference type="GO" id="GO:0006640">
    <property type="term" value="P:monoacylglycerol biosynthetic process"/>
    <property type="evidence" value="ECO:0000250"/>
    <property type="project" value="UniProtKB"/>
</dbReference>
<dbReference type="GO" id="GO:0019432">
    <property type="term" value="P:triglyceride biosynthetic process"/>
    <property type="evidence" value="ECO:0000314"/>
    <property type="project" value="dictyBase"/>
</dbReference>
<dbReference type="InterPro" id="IPR004299">
    <property type="entry name" value="MBOAT_fam"/>
</dbReference>
<dbReference type="InterPro" id="IPR014371">
    <property type="entry name" value="Oat_ACAT_DAG_ARE"/>
</dbReference>
<dbReference type="PANTHER" id="PTHR10408:SF7">
    <property type="entry name" value="DIACYLGLYCEROL O-ACYLTRANSFERASE 1"/>
    <property type="match status" value="1"/>
</dbReference>
<dbReference type="PANTHER" id="PTHR10408">
    <property type="entry name" value="STEROL O-ACYLTRANSFERASE"/>
    <property type="match status" value="1"/>
</dbReference>
<dbReference type="Pfam" id="PF03062">
    <property type="entry name" value="MBOAT"/>
    <property type="match status" value="1"/>
</dbReference>
<dbReference type="PIRSF" id="PIRSF000439">
    <property type="entry name" value="Oat_ACAT_DAG_ARE"/>
    <property type="match status" value="1"/>
</dbReference>
<comment type="function">
    <text evidence="1">Catalyzes the terminal and only committed step in triacylglycerol synthesis by using diacylglycerol and fatty acyl CoA as substrates.</text>
</comment>
<comment type="catalytic activity">
    <reaction evidence="1">
        <text>an acyl-CoA + a 1,2-diacyl-sn-glycerol = a triacyl-sn-glycerol + CoA</text>
        <dbReference type="Rhea" id="RHEA:10868"/>
        <dbReference type="ChEBI" id="CHEBI:17815"/>
        <dbReference type="ChEBI" id="CHEBI:57287"/>
        <dbReference type="ChEBI" id="CHEBI:58342"/>
        <dbReference type="ChEBI" id="CHEBI:64615"/>
        <dbReference type="EC" id="2.3.1.20"/>
    </reaction>
    <physiologicalReaction direction="left-to-right" evidence="1">
        <dbReference type="Rhea" id="RHEA:10869"/>
    </physiologicalReaction>
</comment>
<comment type="catalytic activity">
    <reaction evidence="1">
        <text>all-trans-retinol + an acyl-CoA = an all-trans-retinyl ester + CoA</text>
        <dbReference type="Rhea" id="RHEA:11488"/>
        <dbReference type="ChEBI" id="CHEBI:17336"/>
        <dbReference type="ChEBI" id="CHEBI:57287"/>
        <dbReference type="ChEBI" id="CHEBI:58342"/>
        <dbReference type="ChEBI" id="CHEBI:63410"/>
        <dbReference type="EC" id="2.3.1.76"/>
    </reaction>
    <physiologicalReaction direction="left-to-right" evidence="1">
        <dbReference type="Rhea" id="RHEA:11489"/>
    </physiologicalReaction>
</comment>
<comment type="catalytic activity">
    <reaction evidence="1">
        <text>2-(9Z-octadecenoyl)-glycerol + (9Z)-octadecenoyl-CoA = 1,2-di-(9Z-octadecenoyl)-sn-glycerol + CoA</text>
        <dbReference type="Rhea" id="RHEA:37911"/>
        <dbReference type="ChEBI" id="CHEBI:52333"/>
        <dbReference type="ChEBI" id="CHEBI:57287"/>
        <dbReference type="ChEBI" id="CHEBI:57387"/>
        <dbReference type="ChEBI" id="CHEBI:73990"/>
    </reaction>
    <physiologicalReaction direction="left-to-right" evidence="1">
        <dbReference type="Rhea" id="RHEA:37912"/>
    </physiologicalReaction>
</comment>
<comment type="catalytic activity">
    <reaction evidence="1">
        <text>1,2-di-(9Z-octadecenoyl)-sn-glycerol + (9Z)-octadecenoyl-CoA = 1,2,3-tri-(9Z-octadecenoyl)-glycerol + CoA</text>
        <dbReference type="Rhea" id="RHEA:38219"/>
        <dbReference type="ChEBI" id="CHEBI:52333"/>
        <dbReference type="ChEBI" id="CHEBI:53753"/>
        <dbReference type="ChEBI" id="CHEBI:57287"/>
        <dbReference type="ChEBI" id="CHEBI:57387"/>
    </reaction>
    <physiologicalReaction direction="left-to-right" evidence="1">
        <dbReference type="Rhea" id="RHEA:38220"/>
    </physiologicalReaction>
</comment>
<comment type="catalytic activity">
    <reaction evidence="1 2">
        <text>all-trans-retinol + hexadecanoyl-CoA = all-trans-retinyl hexadecanoate + CoA</text>
        <dbReference type="Rhea" id="RHEA:38175"/>
        <dbReference type="ChEBI" id="CHEBI:17336"/>
        <dbReference type="ChEBI" id="CHEBI:17616"/>
        <dbReference type="ChEBI" id="CHEBI:57287"/>
        <dbReference type="ChEBI" id="CHEBI:57379"/>
    </reaction>
    <physiologicalReaction direction="left-to-right" evidence="1 2">
        <dbReference type="Rhea" id="RHEA:38176"/>
    </physiologicalReaction>
</comment>
<comment type="catalytic activity">
    <reaction evidence="1">
        <text>1-O-(9Z-octadecenyl)-glycerol + (9Z)-octadecenoyl-CoA = 1-O-(9Z-octadecyl)-3-(9Z-octadecenoyl)-glycerol + CoA</text>
        <dbReference type="Rhea" id="RHEA:55340"/>
        <dbReference type="ChEBI" id="CHEBI:34116"/>
        <dbReference type="ChEBI" id="CHEBI:57287"/>
        <dbReference type="ChEBI" id="CHEBI:57387"/>
        <dbReference type="ChEBI" id="CHEBI:197429"/>
    </reaction>
    <physiologicalReaction direction="left-to-right" evidence="1">
        <dbReference type="Rhea" id="RHEA:55341"/>
    </physiologicalReaction>
</comment>
<comment type="catalytic activity">
    <reaction evidence="1">
        <text>1-O-(9Z-octadecyl)-3-(9Z-octadecenoyl)-glycerol + (9Z)-octadecenoyl-CoA = 1-O-(9Z-octadecenyl)-2,3-di-(9Z-octadecenoyl)glycerol + CoA</text>
        <dbReference type="Rhea" id="RHEA:55344"/>
        <dbReference type="ChEBI" id="CHEBI:57287"/>
        <dbReference type="ChEBI" id="CHEBI:57387"/>
        <dbReference type="ChEBI" id="CHEBI:138735"/>
        <dbReference type="ChEBI" id="CHEBI:197429"/>
    </reaction>
    <physiologicalReaction direction="left-to-right" evidence="1">
        <dbReference type="Rhea" id="RHEA:55345"/>
    </physiologicalReaction>
</comment>
<comment type="catalytic activity">
    <reaction evidence="1">
        <text>1-(9Z-octadecenoyl)-glycerol + (9Z)-octadecenoyl-CoA = 1,2-di-(9Z-octadecenoyl)-glycerol + CoA</text>
        <dbReference type="Rhea" id="RHEA:37915"/>
        <dbReference type="ChEBI" id="CHEBI:52323"/>
        <dbReference type="ChEBI" id="CHEBI:57287"/>
        <dbReference type="ChEBI" id="CHEBI:57387"/>
        <dbReference type="ChEBI" id="CHEBI:75342"/>
    </reaction>
    <physiologicalReaction direction="left-to-right" evidence="1">
        <dbReference type="Rhea" id="RHEA:37916"/>
    </physiologicalReaction>
</comment>
<comment type="catalytic activity">
    <reaction evidence="1">
        <text>1,2-di-(9Z-octadecenoyl)-glycerol + (9Z)-octadecenoate + H(+) = 1,2,3-tri-(9Z-octadecenoyl)-glycerol + H2O</text>
        <dbReference type="Rhea" id="RHEA:38379"/>
        <dbReference type="ChEBI" id="CHEBI:15377"/>
        <dbReference type="ChEBI" id="CHEBI:15378"/>
        <dbReference type="ChEBI" id="CHEBI:30823"/>
        <dbReference type="ChEBI" id="CHEBI:52323"/>
        <dbReference type="ChEBI" id="CHEBI:53753"/>
    </reaction>
    <physiologicalReaction direction="left-to-right" evidence="1">
        <dbReference type="Rhea" id="RHEA:38380"/>
    </physiologicalReaction>
</comment>
<comment type="catalytic activity">
    <reaction evidence="2">
        <text>1-octadecanoyl-2-(5Z,8Z,11Z,14Z-eicosatetraenoyl)-sn-glycerol + (9Z)-octadecenoyl-CoA = 1-octadecanoyl-2-(5Z,8Z,11Z,14Z)-eicosatetraenoyl-3-(9Z)-octadecenoyl-sn-glycerol + CoA</text>
        <dbReference type="Rhea" id="RHEA:38307"/>
        <dbReference type="ChEBI" id="CHEBI:57287"/>
        <dbReference type="ChEBI" id="CHEBI:57387"/>
        <dbReference type="ChEBI" id="CHEBI:75728"/>
        <dbReference type="ChEBI" id="CHEBI:75729"/>
    </reaction>
    <physiologicalReaction direction="left-to-right" evidence="2">
        <dbReference type="Rhea" id="RHEA:38308"/>
    </physiologicalReaction>
</comment>
<comment type="catalytic activity">
    <reaction evidence="2">
        <text>hexadecane-1,2-diol + 2 hexadecanoyl-CoA = 1,2-O,O-dihexadecanoyl-1,2-hexadecanediol + 2 CoA</text>
        <dbReference type="Rhea" id="RHEA:38211"/>
        <dbReference type="ChEBI" id="CHEBI:57287"/>
        <dbReference type="ChEBI" id="CHEBI:57379"/>
        <dbReference type="ChEBI" id="CHEBI:75586"/>
        <dbReference type="ChEBI" id="CHEBI:75608"/>
    </reaction>
    <physiologicalReaction direction="left-to-right" evidence="2">
        <dbReference type="Rhea" id="RHEA:38212"/>
    </physiologicalReaction>
</comment>
<comment type="catalytic activity">
    <reaction evidence="2">
        <text>hexadecane-1,2-diol + hexadecanoyl-CoA = 2-hydroxyhexadecyl hexadecanoate + CoA</text>
        <dbReference type="Rhea" id="RHEA:38171"/>
        <dbReference type="ChEBI" id="CHEBI:57287"/>
        <dbReference type="ChEBI" id="CHEBI:57379"/>
        <dbReference type="ChEBI" id="CHEBI:75586"/>
        <dbReference type="ChEBI" id="CHEBI:75587"/>
    </reaction>
    <physiologicalReaction direction="left-to-right" evidence="2">
        <dbReference type="Rhea" id="RHEA:38172"/>
    </physiologicalReaction>
</comment>
<comment type="catalytic activity">
    <reaction evidence="2">
        <text>2-(9Z-octadecenoyl)-glycerol + hexadecanoyl-CoA = 1-hexadecanoyl-2-(9Z-octadecenoyl)-sn-glycerol + CoA</text>
        <dbReference type="Rhea" id="RHEA:38071"/>
        <dbReference type="ChEBI" id="CHEBI:57287"/>
        <dbReference type="ChEBI" id="CHEBI:57379"/>
        <dbReference type="ChEBI" id="CHEBI:73990"/>
        <dbReference type="ChEBI" id="CHEBI:75466"/>
    </reaction>
    <physiologicalReaction direction="left-to-right" evidence="2">
        <dbReference type="Rhea" id="RHEA:38072"/>
    </physiologicalReaction>
</comment>
<comment type="catalytic activity">
    <reaction evidence="2">
        <text>1,2-di-(9Z-octadecenoyl)-sn-glycerol + hexadecanoyl-CoA = 1,2-di-(9Z)-octadecenoyl-3-hexadecanoyl-sn-glycerol + CoA</text>
        <dbReference type="Rhea" id="RHEA:38163"/>
        <dbReference type="ChEBI" id="CHEBI:52333"/>
        <dbReference type="ChEBI" id="CHEBI:57287"/>
        <dbReference type="ChEBI" id="CHEBI:57379"/>
        <dbReference type="ChEBI" id="CHEBI:75583"/>
    </reaction>
    <physiologicalReaction direction="left-to-right" evidence="2">
        <dbReference type="Rhea" id="RHEA:38164"/>
    </physiologicalReaction>
</comment>
<comment type="catalytic activity">
    <reaction evidence="2">
        <text>hexadecan-1-ol + hexadecanoyl-CoA = hexadecanyl hexadecanoate + CoA</text>
        <dbReference type="Rhea" id="RHEA:38167"/>
        <dbReference type="ChEBI" id="CHEBI:16125"/>
        <dbReference type="ChEBI" id="CHEBI:57287"/>
        <dbReference type="ChEBI" id="CHEBI:57379"/>
        <dbReference type="ChEBI" id="CHEBI:75584"/>
    </reaction>
    <physiologicalReaction direction="left-to-right" evidence="2">
        <dbReference type="Rhea" id="RHEA:38168"/>
    </physiologicalReaction>
</comment>
<comment type="catalytic activity">
    <reaction evidence="2">
        <text>13-cis-retinol + hexadecanoyl-CoA = 13-cis-retinyl hexadecanoate + CoA</text>
        <dbReference type="Rhea" id="RHEA:55296"/>
        <dbReference type="ChEBI" id="CHEBI:45479"/>
        <dbReference type="ChEBI" id="CHEBI:57287"/>
        <dbReference type="ChEBI" id="CHEBI:57379"/>
        <dbReference type="ChEBI" id="CHEBI:138722"/>
    </reaction>
    <physiologicalReaction direction="left-to-right" evidence="2">
        <dbReference type="Rhea" id="RHEA:55297"/>
    </physiologicalReaction>
</comment>
<comment type="catalytic activity">
    <reaction evidence="2">
        <text>1,3-di-(9Z-octadecenoyl)-glycerol + (9Z)-octadecenoyl-CoA = 1,2,3-tri-(9Z-octadecenoyl)-glycerol + CoA</text>
        <dbReference type="Rhea" id="RHEA:38435"/>
        <dbReference type="ChEBI" id="CHEBI:53753"/>
        <dbReference type="ChEBI" id="CHEBI:57287"/>
        <dbReference type="ChEBI" id="CHEBI:57387"/>
        <dbReference type="ChEBI" id="CHEBI:75735"/>
    </reaction>
    <physiologicalReaction direction="left-to-right" evidence="2">
        <dbReference type="Rhea" id="RHEA:38436"/>
    </physiologicalReaction>
</comment>
<comment type="catalytic activity">
    <reaction evidence="2">
        <text>2,3-di-(9Z)-octadecenoyl-sn-glycerol + (9Z)-octadecenoyl-CoA = 1,2,3-tri-(9Z-octadecenoyl)-glycerol + CoA</text>
        <dbReference type="Rhea" id="RHEA:38439"/>
        <dbReference type="ChEBI" id="CHEBI:53753"/>
        <dbReference type="ChEBI" id="CHEBI:57287"/>
        <dbReference type="ChEBI" id="CHEBI:57387"/>
        <dbReference type="ChEBI" id="CHEBI:75824"/>
    </reaction>
    <physiologicalReaction direction="left-to-right" evidence="2">
        <dbReference type="Rhea" id="RHEA:38440"/>
    </physiologicalReaction>
</comment>
<comment type="pathway">
    <text>Lipid metabolism; glycerolipid metabolism.</text>
</comment>
<comment type="subcellular location">
    <subcellularLocation>
        <location evidence="2">Endoplasmic reticulum membrane</location>
        <topology evidence="1">Multi-pass membrane protein</topology>
    </subcellularLocation>
</comment>
<comment type="similarity">
    <text evidence="5">Belongs to the membrane-bound acyltransferase family. Sterol o-acyltransferase subfamily.</text>
</comment>
<accession>Q55BH9</accession>
<sequence>MEPIPPSNGNKNNSMDKQPQQPQQPQQQQQQQQQQRRDQRNSKLNELNETERVRNRFISHEFHKLDRTKSRIDAPKISFSDSESESDSEFFLAKRNTNNNNQNNTSPTFSSANGKQSNLTQRKINTQIQSKQPTNNNVQPLTDDEGTINHSNHHHHHHNQNNNGNNNNNNNNNNNNNKISTPPKQEEKMTMNGLFTLRPSILSSESNGSSYRGFLNLLLILLITASFRLVILNHLLYGIRINLDLYKISEYHRWPGVMISLMINLFIIAAYLIEKAAAKQLLPDRICYLLRIINCAAVIIVPSGSIIAFSPNPASGIIVMILICTFSMKIISYAYENSKQRKLNPDNKKFVIDPTNTSIYPNNLSLRSTYWFMLVPTLVYQLSYPRSPKIRKGYLLRRIVEALSLSLLILWMVNQYMLPLVQNSIEPLEKIDIVLIVERIMKLSLPNLYVWLLGFYVFFHLYLNIVAEITRFGDREFYRDWWNSTGLDYFWRTWNMPVHHWMVVLIYTPMRRRGFSKNMGYFMCFFVSAIFHELVISIPFHSLKLWGFFGIMSQMVLIALTKNLMNGRNLGNVIFWISIVLGQPLVVLLYYRNFVLENPEWYRNVEPPTSPPVMPFY</sequence>